<name>Y3401_MYCTU</name>
<accession>P9WN13</accession>
<accession>L0TCF3</accession>
<accession>Q50724</accession>
<dbReference type="EC" id="3.2.1.-"/>
<dbReference type="EMBL" id="AL123456">
    <property type="protein sequence ID" value="CCP46223.1"/>
    <property type="molecule type" value="Genomic_DNA"/>
</dbReference>
<dbReference type="PIR" id="F70735">
    <property type="entry name" value="F70735"/>
</dbReference>
<dbReference type="RefSeq" id="NP_217918.1">
    <property type="nucleotide sequence ID" value="NC_000962.3"/>
</dbReference>
<dbReference type="RefSeq" id="WP_003900047.1">
    <property type="nucleotide sequence ID" value="NZ_NVQJ01000027.1"/>
</dbReference>
<dbReference type="SMR" id="P9WN13"/>
<dbReference type="FunCoup" id="P9WN13">
    <property type="interactions" value="43"/>
</dbReference>
<dbReference type="STRING" id="83332.Rv3401"/>
<dbReference type="PaxDb" id="83332-Rv3401"/>
<dbReference type="DNASU" id="887928"/>
<dbReference type="GeneID" id="887928"/>
<dbReference type="KEGG" id="mtu:Rv3401"/>
<dbReference type="KEGG" id="mtv:RVBD_3401"/>
<dbReference type="TubercuList" id="Rv3401"/>
<dbReference type="eggNOG" id="COG1554">
    <property type="taxonomic scope" value="Bacteria"/>
</dbReference>
<dbReference type="InParanoid" id="P9WN13"/>
<dbReference type="OrthoDB" id="9816160at2"/>
<dbReference type="PhylomeDB" id="P9WN13"/>
<dbReference type="Proteomes" id="UP000001584">
    <property type="component" value="Chromosome"/>
</dbReference>
<dbReference type="GO" id="GO:0005886">
    <property type="term" value="C:plasma membrane"/>
    <property type="evidence" value="ECO:0007005"/>
    <property type="project" value="MTBBASE"/>
</dbReference>
<dbReference type="GO" id="GO:0030246">
    <property type="term" value="F:carbohydrate binding"/>
    <property type="evidence" value="ECO:0007669"/>
    <property type="project" value="InterPro"/>
</dbReference>
<dbReference type="GO" id="GO:0016757">
    <property type="term" value="F:glycosyltransferase activity"/>
    <property type="evidence" value="ECO:0007669"/>
    <property type="project" value="UniProtKB-ARBA"/>
</dbReference>
<dbReference type="GO" id="GO:0004553">
    <property type="term" value="F:hydrolase activity, hydrolyzing O-glycosyl compounds"/>
    <property type="evidence" value="ECO:0000318"/>
    <property type="project" value="GO_Central"/>
</dbReference>
<dbReference type="GO" id="GO:0005975">
    <property type="term" value="P:carbohydrate metabolic process"/>
    <property type="evidence" value="ECO:0000318"/>
    <property type="project" value="GO_Central"/>
</dbReference>
<dbReference type="FunFam" id="1.50.10.10:FF:000029">
    <property type="entry name" value="Family 65 glycosyl hydrolase"/>
    <property type="match status" value="1"/>
</dbReference>
<dbReference type="FunFam" id="2.70.98.40:FF:000001">
    <property type="entry name" value="Family 65 glycosyl hydrolase"/>
    <property type="match status" value="1"/>
</dbReference>
<dbReference type="Gene3D" id="1.50.10.10">
    <property type="match status" value="1"/>
</dbReference>
<dbReference type="Gene3D" id="2.70.98.40">
    <property type="entry name" value="Glycoside hydrolase, family 65, N-terminal domain"/>
    <property type="match status" value="1"/>
</dbReference>
<dbReference type="Gene3D" id="2.60.420.10">
    <property type="entry name" value="Maltose phosphorylase, domain 3"/>
    <property type="match status" value="1"/>
</dbReference>
<dbReference type="InterPro" id="IPR008928">
    <property type="entry name" value="6-hairpin_glycosidase_sf"/>
</dbReference>
<dbReference type="InterPro" id="IPR012341">
    <property type="entry name" value="6hp_glycosidase-like_sf"/>
</dbReference>
<dbReference type="InterPro" id="IPR011013">
    <property type="entry name" value="Gal_mutarotase_sf_dom"/>
</dbReference>
<dbReference type="InterPro" id="IPR005194">
    <property type="entry name" value="Glyco_hydro_65_C"/>
</dbReference>
<dbReference type="InterPro" id="IPR005195">
    <property type="entry name" value="Glyco_hydro_65_M"/>
</dbReference>
<dbReference type="InterPro" id="IPR005196">
    <property type="entry name" value="Glyco_hydro_65_N"/>
</dbReference>
<dbReference type="InterPro" id="IPR037018">
    <property type="entry name" value="Glyco_hydro_65_N_sf"/>
</dbReference>
<dbReference type="InterPro" id="IPR017045">
    <property type="entry name" value="Malt_Pase/Glycosyl_Hdrlase"/>
</dbReference>
<dbReference type="PANTHER" id="PTHR11051">
    <property type="entry name" value="GLYCOSYL HYDROLASE-RELATED"/>
    <property type="match status" value="1"/>
</dbReference>
<dbReference type="PANTHER" id="PTHR11051:SF13">
    <property type="entry name" value="GLYCOSYL TRANSFERASE"/>
    <property type="match status" value="1"/>
</dbReference>
<dbReference type="Pfam" id="PF03633">
    <property type="entry name" value="Glyco_hydro_65C"/>
    <property type="match status" value="1"/>
</dbReference>
<dbReference type="Pfam" id="PF03632">
    <property type="entry name" value="Glyco_hydro_65m"/>
    <property type="match status" value="1"/>
</dbReference>
<dbReference type="Pfam" id="PF03636">
    <property type="entry name" value="Glyco_hydro_65N"/>
    <property type="match status" value="1"/>
</dbReference>
<dbReference type="PIRSF" id="PIRSF036289">
    <property type="entry name" value="Glycosyl_hydrolase_malt_phosph"/>
    <property type="match status" value="1"/>
</dbReference>
<dbReference type="SUPFAM" id="SSF74650">
    <property type="entry name" value="Galactose mutarotase-like"/>
    <property type="match status" value="1"/>
</dbReference>
<dbReference type="SUPFAM" id="SSF48208">
    <property type="entry name" value="Six-hairpin glycosidases"/>
    <property type="match status" value="1"/>
</dbReference>
<feature type="chain" id="PRO_0000108021" description="Uncharacterized glycosyl hydrolase Rv3401">
    <location>
        <begin position="1"/>
        <end position="786"/>
    </location>
</feature>
<feature type="region of interest" description="Disordered" evidence="2">
    <location>
        <begin position="762"/>
        <end position="786"/>
    </location>
</feature>
<feature type="compositionally biased region" description="Pro residues" evidence="2">
    <location>
        <begin position="766"/>
        <end position="776"/>
    </location>
</feature>
<feature type="active site" description="Proton donor" evidence="1">
    <location>
        <position position="488"/>
    </location>
</feature>
<feature type="binding site" evidence="1">
    <location>
        <begin position="361"/>
        <end position="362"/>
    </location>
    <ligand>
        <name>substrate</name>
    </ligand>
</feature>
<feature type="binding site" evidence="1">
    <location>
        <begin position="590"/>
        <end position="591"/>
    </location>
    <ligand>
        <name>substrate</name>
    </ligand>
</feature>
<protein>
    <recommendedName>
        <fullName>Uncharacterized glycosyl hydrolase Rv3401</fullName>
        <ecNumber>3.2.1.-</ecNumber>
    </recommendedName>
</protein>
<organism>
    <name type="scientific">Mycobacterium tuberculosis (strain ATCC 25618 / H37Rv)</name>
    <dbReference type="NCBI Taxonomy" id="83332"/>
    <lineage>
        <taxon>Bacteria</taxon>
        <taxon>Bacillati</taxon>
        <taxon>Actinomycetota</taxon>
        <taxon>Actinomycetes</taxon>
        <taxon>Mycobacteriales</taxon>
        <taxon>Mycobacteriaceae</taxon>
        <taxon>Mycobacterium</taxon>
        <taxon>Mycobacterium tuberculosis complex</taxon>
    </lineage>
</organism>
<evidence type="ECO:0000250" key="1">
    <source>
        <dbReference type="UniProtKB" id="D6XZ22"/>
    </source>
</evidence>
<evidence type="ECO:0000256" key="2">
    <source>
        <dbReference type="SAM" id="MobiDB-lite"/>
    </source>
</evidence>
<evidence type="ECO:0000305" key="3"/>
<reference key="1">
    <citation type="journal article" date="1998" name="Nature">
        <title>Deciphering the biology of Mycobacterium tuberculosis from the complete genome sequence.</title>
        <authorList>
            <person name="Cole S.T."/>
            <person name="Brosch R."/>
            <person name="Parkhill J."/>
            <person name="Garnier T."/>
            <person name="Churcher C.M."/>
            <person name="Harris D.E."/>
            <person name="Gordon S.V."/>
            <person name="Eiglmeier K."/>
            <person name="Gas S."/>
            <person name="Barry C.E. III"/>
            <person name="Tekaia F."/>
            <person name="Badcock K."/>
            <person name="Basham D."/>
            <person name="Brown D."/>
            <person name="Chillingworth T."/>
            <person name="Connor R."/>
            <person name="Davies R.M."/>
            <person name="Devlin K."/>
            <person name="Feltwell T."/>
            <person name="Gentles S."/>
            <person name="Hamlin N."/>
            <person name="Holroyd S."/>
            <person name="Hornsby T."/>
            <person name="Jagels K."/>
            <person name="Krogh A."/>
            <person name="McLean J."/>
            <person name="Moule S."/>
            <person name="Murphy L.D."/>
            <person name="Oliver S."/>
            <person name="Osborne J."/>
            <person name="Quail M.A."/>
            <person name="Rajandream M.A."/>
            <person name="Rogers J."/>
            <person name="Rutter S."/>
            <person name="Seeger K."/>
            <person name="Skelton S."/>
            <person name="Squares S."/>
            <person name="Squares R."/>
            <person name="Sulston J.E."/>
            <person name="Taylor K."/>
            <person name="Whitehead S."/>
            <person name="Barrell B.G."/>
        </authorList>
    </citation>
    <scope>NUCLEOTIDE SEQUENCE [LARGE SCALE GENOMIC DNA]</scope>
    <source>
        <strain>ATCC 25618 / H37Rv</strain>
    </source>
</reference>
<reference key="2">
    <citation type="journal article" date="2011" name="Mol. Cell. Proteomics">
        <title>Proteogenomic analysis of Mycobacterium tuberculosis by high resolution mass spectrometry.</title>
        <authorList>
            <person name="Kelkar D.S."/>
            <person name="Kumar D."/>
            <person name="Kumar P."/>
            <person name="Balakrishnan L."/>
            <person name="Muthusamy B."/>
            <person name="Yadav A.K."/>
            <person name="Shrivastava P."/>
            <person name="Marimuthu A."/>
            <person name="Anand S."/>
            <person name="Sundaram H."/>
            <person name="Kingsbury R."/>
            <person name="Harsha H.C."/>
            <person name="Nair B."/>
            <person name="Prasad T.S."/>
            <person name="Chauhan D.S."/>
            <person name="Katoch K."/>
            <person name="Katoch V.M."/>
            <person name="Kumar P."/>
            <person name="Chaerkady R."/>
            <person name="Ramachandran S."/>
            <person name="Dash D."/>
            <person name="Pandey A."/>
        </authorList>
    </citation>
    <scope>IDENTIFICATION BY MASS SPECTROMETRY [LARGE SCALE ANALYSIS]</scope>
    <source>
        <strain>ATCC 25618 / H37Rv</strain>
    </source>
</reference>
<gene>
    <name type="ordered locus">Rv3401</name>
    <name type="ORF">MTCY78.27c</name>
</gene>
<keyword id="KW-0326">Glycosidase</keyword>
<keyword id="KW-0378">Hydrolase</keyword>
<keyword id="KW-1185">Reference proteome</keyword>
<proteinExistence type="evidence at protein level"/>
<sequence length="786" mass="87316">MITEDAFPVEPWQVRETKLNLNLLAQSESLFALSNGHIGLRGNLDEGEPFGLPGTYLNSFYEIRPLPYAEAGYGYPEAGQTVVDVTNGKIFRLLVGDEPFDVRYGELISHERILDLRAGTLTRRAHWRSPAGKQVKVTSTRLVSLAHRSVAAIEYVVEAIEEFVRVTVQSELVTNEDVPETSADPRVSAILDRPLQAVEHERTERGALLMHRTRASALMMAAGMEHEVEVPGRVEITTDARPDLARTTVICGLRPGQKLRIVKYLAYGWSSLRSRPALRDQAAGALHGARYSGWQGLLDAQRAYLDDFWDSADVEVEGDPECQQAVRFGLFHLLQASARAERRAIPSKGLTGTGYDGHAFWDTEGFVLPVLTYTAPHAVADALRWRASTLDLAKERAAELGLEGAAFPWRTIRGQESSAYWPAGTAAWHINADIAMAFERYRIVTGDGSLEEECGLAVLIETARLWLSLGHHDRHGVWHLDGVTGPDEYTAVVRDNVFTNLMAAHNLHTAADACLRHPEAAEAMGVTTEEMAAWRDAADAANIPYDEELGVHQQCEGFTTLAEWDFEANTTYPLLLHEAYVRLYPAQVIKQADLVLAMQWQSHAFTPEQKARNVDYYERRMVRDSSLSACTQAVMCAEVGHLELAHDYAYEAALIDLRDLHRNTRDGLHMASLAGAWTALVVGFGGLRDDEGILSIDPQLPDGISRLRFRLRWRGFRLIVDANHTDVTFILGDGPGTQLTMRHAGQDLTLHTDTPSTIAVRTRKPLLPPPPQPPGREPVHRRALAR</sequence>
<comment type="similarity">
    <text evidence="3">Belongs to the glycosyl hydrolase 65 family.</text>
</comment>